<proteinExistence type="evidence at protein level"/>
<reference key="1">
    <citation type="journal article" date="1998" name="Nature">
        <title>The complete genome of the hyperthermophilic bacterium Aquifex aeolicus.</title>
        <authorList>
            <person name="Deckert G."/>
            <person name="Warren P.V."/>
            <person name="Gaasterland T."/>
            <person name="Young W.G."/>
            <person name="Lenox A.L."/>
            <person name="Graham D.E."/>
            <person name="Overbeek R."/>
            <person name="Snead M.A."/>
            <person name="Keller M."/>
            <person name="Aujay M."/>
            <person name="Huber R."/>
            <person name="Feldman R.A."/>
            <person name="Short J.M."/>
            <person name="Olsen G.J."/>
            <person name="Swanson R.V."/>
        </authorList>
    </citation>
    <scope>NUCLEOTIDE SEQUENCE [LARGE SCALE GENOMIC DNA]</scope>
    <source>
        <strain>VF5</strain>
    </source>
</reference>
<evidence type="ECO:0000255" key="1">
    <source>
        <dbReference type="HAMAP-Rule" id="MF_00444"/>
    </source>
</evidence>
<evidence type="ECO:0007829" key="2">
    <source>
        <dbReference type="PDB" id="8R04"/>
    </source>
</evidence>
<comment type="function">
    <text evidence="1">Cleaves peptides in various proteins in a process that requires ATP hydrolysis. Has a chymotrypsin-like activity. Plays a major role in the degradation of misfolded proteins.</text>
</comment>
<comment type="catalytic activity">
    <reaction evidence="1">
        <text>Hydrolysis of proteins to small peptides in the presence of ATP and magnesium. alpha-casein is the usual test substrate. In the absence of ATP, only oligopeptides shorter than five residues are hydrolyzed (such as succinyl-Leu-Tyr-|-NHMec, and Leu-Tyr-Leu-|-Tyr-Trp, in which cleavage of the -Tyr-|-Leu- and -Tyr-|-Trp bonds also occurs).</text>
        <dbReference type="EC" id="3.4.21.92"/>
    </reaction>
</comment>
<comment type="subunit">
    <text evidence="1">Fourteen ClpP subunits assemble into 2 heptameric rings which stack back to back to give a disk-like structure with a central cavity, resembling the structure of eukaryotic proteasomes.</text>
</comment>
<comment type="subcellular location">
    <subcellularLocation>
        <location evidence="1">Cytoplasm</location>
    </subcellularLocation>
</comment>
<comment type="similarity">
    <text evidence="1">Belongs to the peptidase S14 family.</text>
</comment>
<sequence>MNHKEILDQLVPIVIEQTPRGERAYDIYSRLLQDRIVLLGSPIDDHVANLIVAQLLFLESQDPDKDIYLYINSPGGSVTAGLAIYDTMQYIKPDVVTICMGQAASMGAILLAAGAPGKRYALPHSRIMIHQPLGGIQGQATDIIIHAEEIKRIKEMLIDILAKHTGQPKDKIANDIERDYFMSPYEAKDYGLIDKVIEKRE</sequence>
<accession>O67357</accession>
<dbReference type="EC" id="3.4.21.92" evidence="1"/>
<dbReference type="EMBL" id="AE000657">
    <property type="protein sequence ID" value="AAC07315.1"/>
    <property type="molecule type" value="Genomic_DNA"/>
</dbReference>
<dbReference type="PIR" id="B70416">
    <property type="entry name" value="B70416"/>
</dbReference>
<dbReference type="RefSeq" id="NP_213921.1">
    <property type="nucleotide sequence ID" value="NC_000918.1"/>
</dbReference>
<dbReference type="RefSeq" id="WP_010880859.1">
    <property type="nucleotide sequence ID" value="NC_000918.1"/>
</dbReference>
<dbReference type="PDB" id="8R04">
    <property type="method" value="X-ray"/>
    <property type="resolution" value="2.10 A"/>
    <property type="chains" value="A/B/C/D/E/F/G/H/I/J/K/L/M/N=2-201"/>
</dbReference>
<dbReference type="PDBsum" id="8R04"/>
<dbReference type="SMR" id="O67357"/>
<dbReference type="FunCoup" id="O67357">
    <property type="interactions" value="389"/>
</dbReference>
<dbReference type="STRING" id="224324.aq_1339"/>
<dbReference type="MEROPS" id="S14.001"/>
<dbReference type="EnsemblBacteria" id="AAC07315">
    <property type="protein sequence ID" value="AAC07315"/>
    <property type="gene ID" value="aq_1339"/>
</dbReference>
<dbReference type="KEGG" id="aae:aq_1339"/>
<dbReference type="PATRIC" id="fig|224324.8.peg.1046"/>
<dbReference type="eggNOG" id="COG0740">
    <property type="taxonomic scope" value="Bacteria"/>
</dbReference>
<dbReference type="HOGENOM" id="CLU_058707_3_2_0"/>
<dbReference type="InParanoid" id="O67357"/>
<dbReference type="OrthoDB" id="9802800at2"/>
<dbReference type="BRENDA" id="3.4.21.92">
    <property type="organism ID" value="396"/>
</dbReference>
<dbReference type="Proteomes" id="UP000000798">
    <property type="component" value="Chromosome"/>
</dbReference>
<dbReference type="GO" id="GO:0005737">
    <property type="term" value="C:cytoplasm"/>
    <property type="evidence" value="ECO:0007669"/>
    <property type="project" value="UniProtKB-SubCell"/>
</dbReference>
<dbReference type="GO" id="GO:0009368">
    <property type="term" value="C:endopeptidase Clp complex"/>
    <property type="evidence" value="ECO:0000318"/>
    <property type="project" value="GO_Central"/>
</dbReference>
<dbReference type="GO" id="GO:0004176">
    <property type="term" value="F:ATP-dependent peptidase activity"/>
    <property type="evidence" value="ECO:0000318"/>
    <property type="project" value="GO_Central"/>
</dbReference>
<dbReference type="GO" id="GO:0051117">
    <property type="term" value="F:ATPase binding"/>
    <property type="evidence" value="ECO:0000318"/>
    <property type="project" value="GO_Central"/>
</dbReference>
<dbReference type="GO" id="GO:0004252">
    <property type="term" value="F:serine-type endopeptidase activity"/>
    <property type="evidence" value="ECO:0000318"/>
    <property type="project" value="GO_Central"/>
</dbReference>
<dbReference type="GO" id="GO:0006515">
    <property type="term" value="P:protein quality control for misfolded or incompletely synthesized proteins"/>
    <property type="evidence" value="ECO:0000318"/>
    <property type="project" value="GO_Central"/>
</dbReference>
<dbReference type="CDD" id="cd07017">
    <property type="entry name" value="S14_ClpP_2"/>
    <property type="match status" value="1"/>
</dbReference>
<dbReference type="FunFam" id="3.90.226.10:FF:000001">
    <property type="entry name" value="ATP-dependent Clp protease proteolytic subunit"/>
    <property type="match status" value="1"/>
</dbReference>
<dbReference type="Gene3D" id="3.90.226.10">
    <property type="entry name" value="2-enoyl-CoA Hydratase, Chain A, domain 1"/>
    <property type="match status" value="1"/>
</dbReference>
<dbReference type="HAMAP" id="MF_00444">
    <property type="entry name" value="ClpP"/>
    <property type="match status" value="1"/>
</dbReference>
<dbReference type="InterPro" id="IPR001907">
    <property type="entry name" value="ClpP"/>
</dbReference>
<dbReference type="InterPro" id="IPR029045">
    <property type="entry name" value="ClpP/crotonase-like_dom_sf"/>
</dbReference>
<dbReference type="InterPro" id="IPR023562">
    <property type="entry name" value="ClpP/TepA"/>
</dbReference>
<dbReference type="InterPro" id="IPR033135">
    <property type="entry name" value="ClpP_His_AS"/>
</dbReference>
<dbReference type="InterPro" id="IPR018215">
    <property type="entry name" value="ClpP_Ser_AS"/>
</dbReference>
<dbReference type="NCBIfam" id="TIGR00493">
    <property type="entry name" value="clpP"/>
    <property type="match status" value="1"/>
</dbReference>
<dbReference type="NCBIfam" id="NF001368">
    <property type="entry name" value="PRK00277.1"/>
    <property type="match status" value="1"/>
</dbReference>
<dbReference type="NCBIfam" id="NF009205">
    <property type="entry name" value="PRK12553.1"/>
    <property type="match status" value="1"/>
</dbReference>
<dbReference type="PANTHER" id="PTHR10381">
    <property type="entry name" value="ATP-DEPENDENT CLP PROTEASE PROTEOLYTIC SUBUNIT"/>
    <property type="match status" value="1"/>
</dbReference>
<dbReference type="PANTHER" id="PTHR10381:SF70">
    <property type="entry name" value="ATP-DEPENDENT CLP PROTEASE PROTEOLYTIC SUBUNIT"/>
    <property type="match status" value="1"/>
</dbReference>
<dbReference type="Pfam" id="PF00574">
    <property type="entry name" value="CLP_protease"/>
    <property type="match status" value="1"/>
</dbReference>
<dbReference type="PRINTS" id="PR00127">
    <property type="entry name" value="CLPPROTEASEP"/>
</dbReference>
<dbReference type="SUPFAM" id="SSF52096">
    <property type="entry name" value="ClpP/crotonase"/>
    <property type="match status" value="1"/>
</dbReference>
<dbReference type="PROSITE" id="PS00382">
    <property type="entry name" value="CLP_PROTEASE_HIS"/>
    <property type="match status" value="1"/>
</dbReference>
<dbReference type="PROSITE" id="PS00381">
    <property type="entry name" value="CLP_PROTEASE_SER"/>
    <property type="match status" value="1"/>
</dbReference>
<organism>
    <name type="scientific">Aquifex aeolicus (strain VF5)</name>
    <dbReference type="NCBI Taxonomy" id="224324"/>
    <lineage>
        <taxon>Bacteria</taxon>
        <taxon>Pseudomonadati</taxon>
        <taxon>Aquificota</taxon>
        <taxon>Aquificia</taxon>
        <taxon>Aquificales</taxon>
        <taxon>Aquificaceae</taxon>
        <taxon>Aquifex</taxon>
    </lineage>
</organism>
<keyword id="KW-0002">3D-structure</keyword>
<keyword id="KW-0963">Cytoplasm</keyword>
<keyword id="KW-0378">Hydrolase</keyword>
<keyword id="KW-0645">Protease</keyword>
<keyword id="KW-1185">Reference proteome</keyword>
<keyword id="KW-0720">Serine protease</keyword>
<feature type="chain" id="PRO_0000179481" description="ATP-dependent Clp protease proteolytic subunit">
    <location>
        <begin position="1"/>
        <end position="201"/>
    </location>
</feature>
<feature type="active site" description="Nucleophile" evidence="1">
    <location>
        <position position="105"/>
    </location>
</feature>
<feature type="active site" evidence="1">
    <location>
        <position position="130"/>
    </location>
</feature>
<feature type="helix" evidence="2">
    <location>
        <begin position="27"/>
        <end position="33"/>
    </location>
</feature>
<feature type="strand" evidence="2">
    <location>
        <begin position="36"/>
        <end position="39"/>
    </location>
</feature>
<feature type="helix" evidence="2">
    <location>
        <begin position="45"/>
        <end position="61"/>
    </location>
</feature>
<feature type="strand" evidence="2">
    <location>
        <begin position="67"/>
        <end position="73"/>
    </location>
</feature>
<feature type="helix" evidence="2">
    <location>
        <begin position="78"/>
        <end position="90"/>
    </location>
</feature>
<feature type="strand" evidence="2">
    <location>
        <begin position="91"/>
        <end position="93"/>
    </location>
</feature>
<feature type="strand" evidence="2">
    <location>
        <begin position="95"/>
        <end position="104"/>
    </location>
</feature>
<feature type="helix" evidence="2">
    <location>
        <begin position="106"/>
        <end position="112"/>
    </location>
</feature>
<feature type="strand" evidence="2">
    <location>
        <begin position="119"/>
        <end position="121"/>
    </location>
</feature>
<feature type="strand" evidence="2">
    <location>
        <begin position="126"/>
        <end position="129"/>
    </location>
</feature>
<feature type="strand" evidence="2">
    <location>
        <begin position="133"/>
        <end position="139"/>
    </location>
</feature>
<feature type="helix" evidence="2">
    <location>
        <begin position="140"/>
        <end position="165"/>
    </location>
</feature>
<feature type="helix" evidence="2">
    <location>
        <begin position="169"/>
        <end position="175"/>
    </location>
</feature>
<feature type="strand" evidence="2">
    <location>
        <begin position="180"/>
        <end position="182"/>
    </location>
</feature>
<feature type="helix" evidence="2">
    <location>
        <begin position="184"/>
        <end position="190"/>
    </location>
</feature>
<feature type="strand" evidence="2">
    <location>
        <begin position="194"/>
        <end position="196"/>
    </location>
</feature>
<protein>
    <recommendedName>
        <fullName evidence="1">ATP-dependent Clp protease proteolytic subunit</fullName>
        <ecNumber evidence="1">3.4.21.92</ecNumber>
    </recommendedName>
    <alternativeName>
        <fullName evidence="1">Endopeptidase Clp</fullName>
    </alternativeName>
</protein>
<name>CLPP_AQUAE</name>
<gene>
    <name evidence="1" type="primary">clpP</name>
    <name type="ordered locus">aq_1339</name>
</gene>